<keyword id="KW-0966">Cell projection</keyword>
<keyword id="KW-0969">Cilium</keyword>
<keyword id="KW-1185">Reference proteome</keyword>
<proteinExistence type="evidence at transcript level"/>
<feature type="chain" id="PRO_0000301984" description="Chaperonin-containing T-complex member BBS12">
    <location>
        <begin position="1"/>
        <end position="673"/>
    </location>
</feature>
<name>BBS12_XENLA</name>
<protein>
    <recommendedName>
        <fullName evidence="2">Chaperonin-containing T-complex member BBS12</fullName>
    </recommendedName>
    <alternativeName>
        <fullName>Bardet-Biedl syndrome 12 protein homolog</fullName>
    </alternativeName>
</protein>
<accession>A5PKN5</accession>
<gene>
    <name type="primary">bbs12</name>
</gene>
<dbReference type="EMBL" id="BC142555">
    <property type="protein sequence ID" value="AAI42556.1"/>
    <property type="molecule type" value="mRNA"/>
</dbReference>
<dbReference type="RefSeq" id="NP_001093348.1">
    <property type="nucleotide sequence ID" value="NM_001099878.1"/>
</dbReference>
<dbReference type="GeneID" id="100101288"/>
<dbReference type="KEGG" id="xla:100101288"/>
<dbReference type="AGR" id="Xenbase:XB-GENE-5962528"/>
<dbReference type="CTD" id="100101288"/>
<dbReference type="Xenbase" id="XB-GENE-5962528">
    <property type="gene designation" value="bbs12.L"/>
</dbReference>
<dbReference type="OrthoDB" id="10037098at2759"/>
<dbReference type="Proteomes" id="UP000186698">
    <property type="component" value="Chromosome 1L"/>
</dbReference>
<dbReference type="Bgee" id="100101288">
    <property type="expression patterns" value="Expressed in testis and 14 other cell types or tissues"/>
</dbReference>
<dbReference type="GO" id="GO:0005929">
    <property type="term" value="C:cilium"/>
    <property type="evidence" value="ECO:0007669"/>
    <property type="project" value="UniProtKB-SubCell"/>
</dbReference>
<dbReference type="GO" id="GO:0005524">
    <property type="term" value="F:ATP binding"/>
    <property type="evidence" value="ECO:0007669"/>
    <property type="project" value="InterPro"/>
</dbReference>
<dbReference type="GO" id="GO:0051131">
    <property type="term" value="P:chaperone-mediated protein complex assembly"/>
    <property type="evidence" value="ECO:0000318"/>
    <property type="project" value="GO_Central"/>
</dbReference>
<dbReference type="GO" id="GO:0045494">
    <property type="term" value="P:photoreceptor cell maintenance"/>
    <property type="evidence" value="ECO:0000318"/>
    <property type="project" value="GO_Central"/>
</dbReference>
<dbReference type="Gene3D" id="3.50.7.10">
    <property type="entry name" value="GroEL"/>
    <property type="match status" value="1"/>
</dbReference>
<dbReference type="Gene3D" id="1.10.560.10">
    <property type="entry name" value="GroEL-like equatorial domain"/>
    <property type="match status" value="2"/>
</dbReference>
<dbReference type="Gene3D" id="3.30.260.10">
    <property type="entry name" value="TCP-1-like chaperonin intermediate domain"/>
    <property type="match status" value="1"/>
</dbReference>
<dbReference type="InterPro" id="IPR042984">
    <property type="entry name" value="BBS12"/>
</dbReference>
<dbReference type="InterPro" id="IPR002423">
    <property type="entry name" value="Cpn60/GroEL/TCP-1"/>
</dbReference>
<dbReference type="InterPro" id="IPR027409">
    <property type="entry name" value="GroEL-like_apical_dom_sf"/>
</dbReference>
<dbReference type="InterPro" id="IPR027413">
    <property type="entry name" value="GROEL-like_equatorial_sf"/>
</dbReference>
<dbReference type="InterPro" id="IPR027410">
    <property type="entry name" value="TCP-1-like_intermed_sf"/>
</dbReference>
<dbReference type="PANTHER" id="PTHR46883">
    <property type="entry name" value="BARDET-BIEDL SYNDROME 12 PROTEIN"/>
    <property type="match status" value="1"/>
</dbReference>
<dbReference type="PANTHER" id="PTHR46883:SF1">
    <property type="entry name" value="BARDET-BIEDL SYNDROME 12 PROTEIN"/>
    <property type="match status" value="1"/>
</dbReference>
<dbReference type="Pfam" id="PF00118">
    <property type="entry name" value="Cpn60_TCP1"/>
    <property type="match status" value="1"/>
</dbReference>
<dbReference type="SUPFAM" id="SSF52029">
    <property type="entry name" value="GroEL apical domain-like"/>
    <property type="match status" value="1"/>
</dbReference>
<dbReference type="SUPFAM" id="SSF48592">
    <property type="entry name" value="GroEL equatorial domain-like"/>
    <property type="match status" value="1"/>
</dbReference>
<reference key="1">
    <citation type="submission" date="2007-06" db="EMBL/GenBank/DDBJ databases">
        <authorList>
            <consortium name="NIH - Xenopus Gene Collection (XGC) project"/>
        </authorList>
    </citation>
    <scope>NUCLEOTIDE SEQUENCE [LARGE SCALE MRNA]</scope>
    <source>
        <tissue>Testis</tissue>
    </source>
</reference>
<comment type="function">
    <text evidence="1">Component of the chaperonin-containing T-complex (TRiC), a molecular chaperone complex that assists the folding of proteins upon ATP hydrolysis.</text>
</comment>
<comment type="subunit">
    <text evidence="1">Component of the chaperonin-containing T-complex (TRiC), a heterooligomeric complex of about 850 to 900 kDa that forms two stacked rings, 12 to 16 nm in diameter.</text>
</comment>
<comment type="subcellular location">
    <subcellularLocation>
        <location evidence="1">Cell projection</location>
        <location evidence="1">Cilium</location>
    </subcellularLocation>
</comment>
<comment type="similarity">
    <text evidence="2">Belongs to the TCP-1 chaperonin family. BBS12 subfamily.</text>
</comment>
<evidence type="ECO:0000250" key="1">
    <source>
        <dbReference type="UniProtKB" id="Q6ZW61"/>
    </source>
</evidence>
<evidence type="ECO:0000305" key="2"/>
<sequence length="673" mass="74882">MAIRGHKGLQQLLSMATSVNSFLGPMKSYKFIFDQITHESILTSSSFRLLENLDLTSAIGQLLNETIQAHHKSYKTGTTTLFFMVGAWSSAVQECLHLGIPVSLIVSVMLDGLNSCIGHVHSLQVSLVSQVTSDCTNIKTNGINHSNYSASGDQGNCSSELENNPLPRVSNMRTASEFPVAFHKKPLPLCTGTNLYKTQRRRLFHSRHLAEDLSFFQDVPERPQTTTLNNETLDGLAKGLAHGYQPVMNLVKNAVCLHCAEIKENSLDKSSFNISRLETCSLPGLSEEHTTVSFGYTTLVPTESAAVITHLNGKPLRILLVDGELTESHRHLGFDNPDNVKMVFEHAGNEKHNLEDSWISRAYEKIIQANINLILVRGDVCPFLLKQCIHRNILIVTQVKQNILQAFSECTGAEPVTYLTQINCCSVGNEAFVTLCTRANSIIEVSQKIVISITAKKLNLITATLSSRIPSTMQSIEDQFLTCAYRLHHALQEGNVFYGGGAIELLCIHHLQKLVQESSSSFYAYDNAQFHCLSSWMTESATFYRAAIIGCLAKGWYKYISVLLCNMGGFLSELDAVTFIENELQNISHHSSPIDYVRDQYSKKDLFNDEMGISISHHSLPVYDNVTPKLEAWRRALHLVLTVLQTDAEVITNSATQNQILMSETSNGEYLFL</sequence>
<organism>
    <name type="scientific">Xenopus laevis</name>
    <name type="common">African clawed frog</name>
    <dbReference type="NCBI Taxonomy" id="8355"/>
    <lineage>
        <taxon>Eukaryota</taxon>
        <taxon>Metazoa</taxon>
        <taxon>Chordata</taxon>
        <taxon>Craniata</taxon>
        <taxon>Vertebrata</taxon>
        <taxon>Euteleostomi</taxon>
        <taxon>Amphibia</taxon>
        <taxon>Batrachia</taxon>
        <taxon>Anura</taxon>
        <taxon>Pipoidea</taxon>
        <taxon>Pipidae</taxon>
        <taxon>Xenopodinae</taxon>
        <taxon>Xenopus</taxon>
        <taxon>Xenopus</taxon>
    </lineage>
</organism>